<evidence type="ECO:0000250" key="1">
    <source>
        <dbReference type="UniProtKB" id="D0VWU3"/>
    </source>
</evidence>
<evidence type="ECO:0000250" key="2">
    <source>
        <dbReference type="UniProtKB" id="Q70KY3"/>
    </source>
</evidence>
<evidence type="ECO:0000255" key="3"/>
<evidence type="ECO:0000255" key="4">
    <source>
        <dbReference type="PROSITE-ProRule" id="PRU00498"/>
    </source>
</evidence>
<evidence type="ECO:0000269" key="5">
    <source>
    </source>
</evidence>
<evidence type="ECO:0000305" key="6"/>
<comment type="catalytic activity">
    <reaction evidence="2">
        <text>4 hydroquinone + O2 = 4 benzosemiquinone + 2 H2O</text>
        <dbReference type="Rhea" id="RHEA:11276"/>
        <dbReference type="ChEBI" id="CHEBI:15377"/>
        <dbReference type="ChEBI" id="CHEBI:15379"/>
        <dbReference type="ChEBI" id="CHEBI:17594"/>
        <dbReference type="ChEBI" id="CHEBI:17977"/>
        <dbReference type="EC" id="1.10.3.2"/>
    </reaction>
</comment>
<comment type="cofactor">
    <cofactor evidence="2">
        <name>Cu cation</name>
        <dbReference type="ChEBI" id="CHEBI:23378"/>
    </cofactor>
    <text evidence="2">Binds 4 Cu cations per monomer.</text>
</comment>
<comment type="subunit">
    <text evidence="2">Monomer.</text>
</comment>
<comment type="subcellular location">
    <subcellularLocation>
        <location evidence="5">Secreted</location>
    </subcellularLocation>
</comment>
<comment type="similarity">
    <text evidence="6">Belongs to the multicopper oxidase family.</text>
</comment>
<keyword id="KW-0186">Copper</keyword>
<keyword id="KW-1015">Disulfide bond</keyword>
<keyword id="KW-0325">Glycoprotein</keyword>
<keyword id="KW-0479">Metal-binding</keyword>
<keyword id="KW-0560">Oxidoreductase</keyword>
<keyword id="KW-1185">Reference proteome</keyword>
<keyword id="KW-0964">Secreted</keyword>
<keyword id="KW-0732">Signal</keyword>
<sequence length="633" mass="71552">MKRLGLAALYIGSALAWPEPHGPPSRNVPRDDFPMFNPLPSTDLNTRLIRCEYPSMKGWTYSNKKNGDWLKYVGSKPGEITEYNIDTDNDKYVPQGITRKYHLEVTDESVNMDGTMFDQAKVFNKQYPGPWIQITVTNKLKHNGTAIHWHGIRMMENMFNDGVPGVTQCPIPPGSSMTYRFKASQYGSSWYHSHYSLQYADGLFGPMTIHGPTSAGYDKAVDPLLMTDHLHSSAFEEYHKELEGKPPAMDSIILNGKGDYDQTGDLKKKYRTVLKPGKKYLLRLINTSVATTFVFSIDGHKFQVVGSDFVPIEPYVTDHIAVGIGQRYHVILEGLSEEEAKKNGRYWVRTTPAKGCSKFAPGRGTDDRTGVIYYNKDDGVSPTTEIGAFSLDCRDEPLEKLVPKVKWTVPDPGLNMVGAFEKPADVQLGKWHRPGYPDTDNLVSNWEFGPSPMWINYSEPIIKNLDKDSFPSTWVVYPADDYVNDKWVYLVITGKKLKPLSSQVAVAHPIHLHGHDFVLLQQSMEPWDSTEVNLKLDNPPRREVTLLPAGGFIVIAFKPDNPGSWLLHCHIAWHASAGLALQVLERKEDLKALTLNNPDFDFMQENCRKWDAWHSDKTNYWNPSGHFQDDSGV</sequence>
<organism>
    <name type="scientific">Arthroderma benhamiae (strain ATCC MYA-4681 / CBS 112371)</name>
    <name type="common">Trichophyton mentagrophytes</name>
    <dbReference type="NCBI Taxonomy" id="663331"/>
    <lineage>
        <taxon>Eukaryota</taxon>
        <taxon>Fungi</taxon>
        <taxon>Dikarya</taxon>
        <taxon>Ascomycota</taxon>
        <taxon>Pezizomycotina</taxon>
        <taxon>Eurotiomycetes</taxon>
        <taxon>Eurotiomycetidae</taxon>
        <taxon>Onygenales</taxon>
        <taxon>Arthrodermataceae</taxon>
        <taxon>Trichophyton</taxon>
    </lineage>
</organism>
<protein>
    <recommendedName>
        <fullName evidence="6">Laccase ARB_05828</fullName>
        <ecNumber evidence="2">1.10.3.2</ecNumber>
    </recommendedName>
    <alternativeName>
        <fullName evidence="6">Benzenediol:oxygen oxidoreductase ARB_05828</fullName>
    </alternativeName>
    <alternativeName>
        <fullName evidence="6">Diphenol oxidase ARB_05828</fullName>
    </alternativeName>
    <alternativeName>
        <fullName evidence="6">Urishiol oxidase ARB_05828</fullName>
    </alternativeName>
</protein>
<proteinExistence type="evidence at protein level"/>
<accession>D4APX3</accession>
<dbReference type="EC" id="1.10.3.2" evidence="2"/>
<dbReference type="EMBL" id="ABSU01000004">
    <property type="protein sequence ID" value="EFE34873.1"/>
    <property type="molecule type" value="Genomic_DNA"/>
</dbReference>
<dbReference type="RefSeq" id="XP_003015518.1">
    <property type="nucleotide sequence ID" value="XM_003015472.1"/>
</dbReference>
<dbReference type="SMR" id="D4APX3"/>
<dbReference type="STRING" id="663331.D4APX3"/>
<dbReference type="GeneID" id="9526200"/>
<dbReference type="KEGG" id="abe:ARB_05828"/>
<dbReference type="eggNOG" id="KOG1263">
    <property type="taxonomic scope" value="Eukaryota"/>
</dbReference>
<dbReference type="HOGENOM" id="CLU_006504_3_2_1"/>
<dbReference type="OMA" id="RLIRCEY"/>
<dbReference type="Proteomes" id="UP000008866">
    <property type="component" value="Unassembled WGS sequence"/>
</dbReference>
<dbReference type="GO" id="GO:0005576">
    <property type="term" value="C:extracellular region"/>
    <property type="evidence" value="ECO:0007669"/>
    <property type="project" value="UniProtKB-SubCell"/>
</dbReference>
<dbReference type="GO" id="GO:0005507">
    <property type="term" value="F:copper ion binding"/>
    <property type="evidence" value="ECO:0007669"/>
    <property type="project" value="InterPro"/>
</dbReference>
<dbReference type="GO" id="GO:0052716">
    <property type="term" value="F:hydroquinone:oxygen oxidoreductase activity"/>
    <property type="evidence" value="ECO:0007669"/>
    <property type="project" value="UniProtKB-EC"/>
</dbReference>
<dbReference type="CDD" id="cd13854">
    <property type="entry name" value="CuRO_1_MaLCC_like"/>
    <property type="match status" value="1"/>
</dbReference>
<dbReference type="CDD" id="cd13880">
    <property type="entry name" value="CuRO_2_MaLCC_like"/>
    <property type="match status" value="1"/>
</dbReference>
<dbReference type="CDD" id="cd13901">
    <property type="entry name" value="CuRO_3_MaLCC_like"/>
    <property type="match status" value="1"/>
</dbReference>
<dbReference type="Gene3D" id="2.60.40.420">
    <property type="entry name" value="Cupredoxins - blue copper proteins"/>
    <property type="match status" value="3"/>
</dbReference>
<dbReference type="InterPro" id="IPR011707">
    <property type="entry name" value="Cu-oxidase-like_N"/>
</dbReference>
<dbReference type="InterPro" id="IPR001117">
    <property type="entry name" value="Cu-oxidase_2nd"/>
</dbReference>
<dbReference type="InterPro" id="IPR011706">
    <property type="entry name" value="Cu-oxidase_C"/>
</dbReference>
<dbReference type="InterPro" id="IPR045087">
    <property type="entry name" value="Cu-oxidase_fam"/>
</dbReference>
<dbReference type="InterPro" id="IPR033138">
    <property type="entry name" value="Cu_oxidase_CS"/>
</dbReference>
<dbReference type="InterPro" id="IPR002355">
    <property type="entry name" value="Cu_oxidase_Cu_BS"/>
</dbReference>
<dbReference type="InterPro" id="IPR008972">
    <property type="entry name" value="Cupredoxin"/>
</dbReference>
<dbReference type="PANTHER" id="PTHR11709">
    <property type="entry name" value="MULTI-COPPER OXIDASE"/>
    <property type="match status" value="1"/>
</dbReference>
<dbReference type="PANTHER" id="PTHR11709:SF71">
    <property type="entry name" value="OXIDOREDUCTASE TPCJ"/>
    <property type="match status" value="1"/>
</dbReference>
<dbReference type="Pfam" id="PF00394">
    <property type="entry name" value="Cu-oxidase"/>
    <property type="match status" value="1"/>
</dbReference>
<dbReference type="Pfam" id="PF07731">
    <property type="entry name" value="Cu-oxidase_2"/>
    <property type="match status" value="1"/>
</dbReference>
<dbReference type="Pfam" id="PF07732">
    <property type="entry name" value="Cu-oxidase_3"/>
    <property type="match status" value="1"/>
</dbReference>
<dbReference type="SUPFAM" id="SSF49503">
    <property type="entry name" value="Cupredoxins"/>
    <property type="match status" value="3"/>
</dbReference>
<dbReference type="PROSITE" id="PS00079">
    <property type="entry name" value="MULTICOPPER_OXIDASE1"/>
    <property type="match status" value="1"/>
</dbReference>
<dbReference type="PROSITE" id="PS00080">
    <property type="entry name" value="MULTICOPPER_OXIDASE2"/>
    <property type="match status" value="1"/>
</dbReference>
<name>LAC1_ARTBC</name>
<gene>
    <name type="ORF">ARB_05828</name>
</gene>
<reference key="1">
    <citation type="journal article" date="2011" name="Genome Biol.">
        <title>Comparative and functional genomics provide insights into the pathogenicity of dermatophytic fungi.</title>
        <authorList>
            <person name="Burmester A."/>
            <person name="Shelest E."/>
            <person name="Gloeckner G."/>
            <person name="Heddergott C."/>
            <person name="Schindler S."/>
            <person name="Staib P."/>
            <person name="Heidel A."/>
            <person name="Felder M."/>
            <person name="Petzold A."/>
            <person name="Szafranski K."/>
            <person name="Feuermann M."/>
            <person name="Pedruzzi I."/>
            <person name="Priebe S."/>
            <person name="Groth M."/>
            <person name="Winkler R."/>
            <person name="Li W."/>
            <person name="Kniemeyer O."/>
            <person name="Schroeckh V."/>
            <person name="Hertweck C."/>
            <person name="Hube B."/>
            <person name="White T.C."/>
            <person name="Platzer M."/>
            <person name="Guthke R."/>
            <person name="Heitman J."/>
            <person name="Woestemeyer J."/>
            <person name="Zipfel P.F."/>
            <person name="Monod M."/>
            <person name="Brakhage A.A."/>
        </authorList>
    </citation>
    <scope>NUCLEOTIDE SEQUENCE [LARGE SCALE GENOMIC DNA]</scope>
    <source>
        <strain>ATCC MYA-4681 / CBS 112371</strain>
    </source>
</reference>
<reference key="2">
    <citation type="journal article" date="2011" name="Proteomics">
        <title>Identification of novel secreted proteases during extracellular proteolysis by dermatophytes at acidic pH.</title>
        <authorList>
            <person name="Sriranganadane D."/>
            <person name="Waridel P."/>
            <person name="Salamin K."/>
            <person name="Feuermann M."/>
            <person name="Mignon B."/>
            <person name="Staib P."/>
            <person name="Neuhaus J.M."/>
            <person name="Quadroni M."/>
            <person name="Monod M."/>
        </authorList>
    </citation>
    <scope>IDENTIFICATION BY MASS SPECTROMETRY</scope>
    <scope>SUBCELLULAR LOCATION</scope>
</reference>
<feature type="signal peptide" evidence="3">
    <location>
        <begin position="1"/>
        <end position="16"/>
    </location>
</feature>
<feature type="chain" id="PRO_5003054300" description="Laccase ARB_05828">
    <location>
        <begin position="17"/>
        <end position="633"/>
    </location>
</feature>
<feature type="propeptide" id="PRO_0000434779" evidence="2 3">
    <location>
        <begin position="22"/>
        <end position="47"/>
    </location>
</feature>
<feature type="domain" description="Plastocyanin-like" evidence="3">
    <location>
        <begin position="224"/>
        <end position="353"/>
    </location>
</feature>
<feature type="binding site" description="type 2 copper site" evidence="1">
    <location>
        <position position="148"/>
    </location>
    <ligand>
        <name>Cu cation</name>
        <dbReference type="ChEBI" id="CHEBI:23378"/>
        <label>1</label>
    </ligand>
</feature>
<feature type="binding site" description="type 3 copper site" evidence="1">
    <location>
        <position position="150"/>
    </location>
    <ligand>
        <name>Cu cation</name>
        <dbReference type="ChEBI" id="CHEBI:23378"/>
        <label>2</label>
    </ligand>
</feature>
<feature type="binding site" description="type 3 copper site" evidence="1">
    <location>
        <position position="192"/>
    </location>
    <ligand>
        <name>Cu cation</name>
        <dbReference type="ChEBI" id="CHEBI:23378"/>
        <label>2</label>
    </ligand>
</feature>
<feature type="binding site" description="type 3 copper site" evidence="1">
    <location>
        <position position="194"/>
    </location>
    <ligand>
        <name>Cu cation</name>
        <dbReference type="ChEBI" id="CHEBI:23378"/>
        <label>3</label>
    </ligand>
</feature>
<feature type="binding site" description="type 1 copper site" evidence="1">
    <location>
        <position position="508"/>
    </location>
    <ligand>
        <name>Cu cation</name>
        <dbReference type="ChEBI" id="CHEBI:23378"/>
        <label>4</label>
    </ligand>
</feature>
<feature type="binding site" description="type 2 copper site" evidence="1">
    <location>
        <position position="511"/>
    </location>
    <ligand>
        <name>Cu cation</name>
        <dbReference type="ChEBI" id="CHEBI:23378"/>
        <label>1</label>
    </ligand>
</feature>
<feature type="binding site" description="type 3 copper site" evidence="1">
    <location>
        <position position="513"/>
    </location>
    <ligand>
        <name>Cu cation</name>
        <dbReference type="ChEBI" id="CHEBI:23378"/>
        <label>3</label>
    </ligand>
</feature>
<feature type="binding site" description="type 3 copper site" evidence="1">
    <location>
        <position position="568"/>
    </location>
    <ligand>
        <name>Cu cation</name>
        <dbReference type="ChEBI" id="CHEBI:23378"/>
        <label>3</label>
    </ligand>
</feature>
<feature type="binding site" description="type 1 copper site" evidence="1">
    <location>
        <position position="569"/>
    </location>
    <ligand>
        <name>Cu cation</name>
        <dbReference type="ChEBI" id="CHEBI:23378"/>
        <label>4</label>
    </ligand>
</feature>
<feature type="binding site" description="type 3 copper site" evidence="1">
    <location>
        <position position="570"/>
    </location>
    <ligand>
        <name>Cu cation</name>
        <dbReference type="ChEBI" id="CHEBI:23378"/>
        <label>2</label>
    </ligand>
</feature>
<feature type="binding site" description="type 1 copper site" evidence="1">
    <location>
        <position position="574"/>
    </location>
    <ligand>
        <name>Cu cation</name>
        <dbReference type="ChEBI" id="CHEBI:23378"/>
        <label>4</label>
    </ligand>
</feature>
<feature type="glycosylation site" description="N-linked (GlcNAc...) asparagine" evidence="4">
    <location>
        <position position="143"/>
    </location>
</feature>
<feature type="glycosylation site" description="N-linked (GlcNAc...) asparagine" evidence="4">
    <location>
        <position position="286"/>
    </location>
</feature>
<feature type="glycosylation site" description="N-linked (GlcNAc...) asparagine" evidence="4">
    <location>
        <position position="456"/>
    </location>
</feature>
<feature type="disulfide bond" evidence="2">
    <location>
        <begin position="169"/>
        <end position="607"/>
    </location>
</feature>